<gene>
    <name type="primary">ugpB</name>
    <name type="ordered locus">Ecok1_34300</name>
    <name type="ORF">APECO1_3006</name>
</gene>
<accession>A1AGY4</accession>
<evidence type="ECO:0000250" key="1">
    <source>
        <dbReference type="UniProtKB" id="P0AG80"/>
    </source>
</evidence>
<evidence type="ECO:0000255" key="2"/>
<evidence type="ECO:0000305" key="3"/>
<feature type="signal peptide" evidence="2">
    <location>
        <begin position="1"/>
        <end position="23"/>
    </location>
</feature>
<feature type="chain" id="PRO_0000292808" description="sn-glycerol-3-phosphate-binding periplasmic protein UgpB">
    <location>
        <begin position="24"/>
        <end position="438"/>
    </location>
</feature>
<feature type="binding site" evidence="1">
    <location>
        <position position="65"/>
    </location>
    <ligand>
        <name>sn-glycerol 3-phosphate</name>
        <dbReference type="ChEBI" id="CHEBI:57597"/>
    </ligand>
</feature>
<feature type="binding site" evidence="1">
    <location>
        <position position="89"/>
    </location>
    <ligand>
        <name>sn-glycerol 3-phosphate</name>
        <dbReference type="ChEBI" id="CHEBI:57597"/>
    </ligand>
</feature>
<feature type="binding site" evidence="1">
    <location>
        <position position="144"/>
    </location>
    <ligand>
        <name>sn-glycerol 3-phosphate</name>
        <dbReference type="ChEBI" id="CHEBI:57597"/>
    </ligand>
</feature>
<feature type="binding site" evidence="1">
    <location>
        <position position="270"/>
    </location>
    <ligand>
        <name>sn-glycerol 3-phosphate</name>
        <dbReference type="ChEBI" id="CHEBI:57597"/>
    </ligand>
</feature>
<feature type="binding site" evidence="1">
    <location>
        <position position="307"/>
    </location>
    <ligand>
        <name>sn-glycerol 3-phosphate</name>
        <dbReference type="ChEBI" id="CHEBI:57597"/>
    </ligand>
</feature>
<feature type="binding site" evidence="1">
    <location>
        <position position="346"/>
    </location>
    <ligand>
        <name>sn-glycerol 3-phosphate</name>
        <dbReference type="ChEBI" id="CHEBI:57597"/>
    </ligand>
</feature>
<feature type="binding site" evidence="1">
    <location>
        <position position="397"/>
    </location>
    <ligand>
        <name>sn-glycerol 3-phosphate</name>
        <dbReference type="ChEBI" id="CHEBI:57597"/>
    </ligand>
</feature>
<keyword id="KW-0574">Periplasm</keyword>
<keyword id="KW-1185">Reference proteome</keyword>
<keyword id="KW-0732">Signal</keyword>
<keyword id="KW-0813">Transport</keyword>
<organism>
    <name type="scientific">Escherichia coli O1:K1 / APEC</name>
    <dbReference type="NCBI Taxonomy" id="405955"/>
    <lineage>
        <taxon>Bacteria</taxon>
        <taxon>Pseudomonadati</taxon>
        <taxon>Pseudomonadota</taxon>
        <taxon>Gammaproteobacteria</taxon>
        <taxon>Enterobacterales</taxon>
        <taxon>Enterobacteriaceae</taxon>
        <taxon>Escherichia</taxon>
    </lineage>
</organism>
<name>UGPB_ECOK1</name>
<comment type="function">
    <text evidence="1">Part of the ABC transporter complex UgpBAEC involved in sn-glycerol-3-phosphate (G3P) import. Binds G3P.</text>
</comment>
<comment type="subunit">
    <text evidence="1">The complex is composed of two ATP-binding proteins (UgpC), two transmembrane proteins (UgpA and UgpE) and a solute-binding protein (UgpB).</text>
</comment>
<comment type="subcellular location">
    <subcellularLocation>
        <location evidence="1">Periplasm</location>
    </subcellularLocation>
</comment>
<comment type="similarity">
    <text evidence="3">Belongs to the bacterial solute-binding protein 1 family.</text>
</comment>
<sequence length="438" mass="48493">MKPLRYTASALALGLALMANAQAVTTIPFWHSMEGELGKEVDSLAQRFNAENPDYKIVPTYKGNYEQNLSAGIAAFRTGNAPAILQVYEVGTATMMASKAIKPVYDVFKEAGIQFDESQFVPTVSGYYSDSKTGHLLSQPFNSSTPVLYYNKDAFKKAGLDPKQPPKTWQDLADYAAKLKASGMKCGYASGWQGWIQLENFSAWNGLPFASKNNGFDGTDAVLEFNKPEQVKHIAMLEEMNKKGDFSYVGRKDESTEKFYNGDCAMTTASSGSLANIREYAKFNYGVGMMPYDADAKDAPQNAIIGGASLWVMQGKDKETYTGVAKFLDFLAKPENAAEWHQKTGYLPITKAAYDLTREQGFYEKNPGADIATRQMLNKPPLPFTKGLRLGNMPQIRVIVDEELESVWTGKKTPQQALDTAVERGNQLLRRFEKSTKS</sequence>
<reference key="1">
    <citation type="journal article" date="2007" name="J. Bacteriol.">
        <title>The genome sequence of avian pathogenic Escherichia coli strain O1:K1:H7 shares strong similarities with human extraintestinal pathogenic E. coli genomes.</title>
        <authorList>
            <person name="Johnson T.J."/>
            <person name="Kariyawasam S."/>
            <person name="Wannemuehler Y."/>
            <person name="Mangiamele P."/>
            <person name="Johnson S.J."/>
            <person name="Doetkott C."/>
            <person name="Skyberg J.A."/>
            <person name="Lynne A.M."/>
            <person name="Johnson J.R."/>
            <person name="Nolan L.K."/>
        </authorList>
    </citation>
    <scope>NUCLEOTIDE SEQUENCE [LARGE SCALE GENOMIC DNA]</scope>
</reference>
<protein>
    <recommendedName>
        <fullName evidence="1">sn-glycerol-3-phosphate-binding periplasmic protein UgpB</fullName>
    </recommendedName>
</protein>
<proteinExistence type="inferred from homology"/>
<dbReference type="EMBL" id="CP000468">
    <property type="protein sequence ID" value="ABJ02924.1"/>
    <property type="molecule type" value="Genomic_DNA"/>
</dbReference>
<dbReference type="RefSeq" id="WP_000803585.1">
    <property type="nucleotide sequence ID" value="NC_008563.1"/>
</dbReference>
<dbReference type="SMR" id="A1AGY4"/>
<dbReference type="KEGG" id="ecv:APECO1_3006"/>
<dbReference type="HOGENOM" id="CLU_031285_3_0_6"/>
<dbReference type="Proteomes" id="UP000008216">
    <property type="component" value="Chromosome"/>
</dbReference>
<dbReference type="GO" id="GO:0030288">
    <property type="term" value="C:outer membrane-bounded periplasmic space"/>
    <property type="evidence" value="ECO:0007669"/>
    <property type="project" value="UniProtKB-ARBA"/>
</dbReference>
<dbReference type="GO" id="GO:0055085">
    <property type="term" value="P:transmembrane transport"/>
    <property type="evidence" value="ECO:0007669"/>
    <property type="project" value="InterPro"/>
</dbReference>
<dbReference type="CDD" id="cd14748">
    <property type="entry name" value="PBP2_UgpB"/>
    <property type="match status" value="1"/>
</dbReference>
<dbReference type="Gene3D" id="3.40.190.10">
    <property type="entry name" value="Periplasmic binding protein-like II"/>
    <property type="match status" value="2"/>
</dbReference>
<dbReference type="InterPro" id="IPR050490">
    <property type="entry name" value="Bact_solute-bd_prot1"/>
</dbReference>
<dbReference type="InterPro" id="IPR006059">
    <property type="entry name" value="SBP"/>
</dbReference>
<dbReference type="InterPro" id="IPR006061">
    <property type="entry name" value="SBP_1_CS"/>
</dbReference>
<dbReference type="NCBIfam" id="NF008211">
    <property type="entry name" value="PRK10974.1"/>
    <property type="match status" value="1"/>
</dbReference>
<dbReference type="PANTHER" id="PTHR43649">
    <property type="entry name" value="ARABINOSE-BINDING PROTEIN-RELATED"/>
    <property type="match status" value="1"/>
</dbReference>
<dbReference type="PANTHER" id="PTHR43649:SF31">
    <property type="entry name" value="SN-GLYCEROL-3-PHOSPHATE-BINDING PERIPLASMIC PROTEIN UGPB"/>
    <property type="match status" value="1"/>
</dbReference>
<dbReference type="Pfam" id="PF13416">
    <property type="entry name" value="SBP_bac_8"/>
    <property type="match status" value="1"/>
</dbReference>
<dbReference type="SUPFAM" id="SSF53850">
    <property type="entry name" value="Periplasmic binding protein-like II"/>
    <property type="match status" value="1"/>
</dbReference>
<dbReference type="PROSITE" id="PS01037">
    <property type="entry name" value="SBP_BACTERIAL_1"/>
    <property type="match status" value="1"/>
</dbReference>